<sequence length="176" mass="18985">MTTIVSVRRNGHVVIAGDGQATLGNTVMKGNVKKVRRLYNDKVIAGFAGGTADAFTLFELFERKLEMHQGHLVKAAVELAKDWRTDRMLRKLEALLAVADETASLIITGNGDVVQPENDLIAIGSGGPYAQAAARALLENTELGAREIAEKALDIAGDICIYTNHFHTIEELTAKA</sequence>
<dbReference type="EC" id="3.4.25.2" evidence="1"/>
<dbReference type="EMBL" id="AE017220">
    <property type="protein sequence ID" value="AAX67887.1"/>
    <property type="molecule type" value="Genomic_DNA"/>
</dbReference>
<dbReference type="RefSeq" id="WP_000208240.1">
    <property type="nucleotide sequence ID" value="NC_006905.1"/>
</dbReference>
<dbReference type="SMR" id="Q57HC5"/>
<dbReference type="MEROPS" id="T01.006"/>
<dbReference type="KEGG" id="sec:SCH_3981"/>
<dbReference type="HOGENOM" id="CLU_093872_1_0_6"/>
<dbReference type="Proteomes" id="UP000000538">
    <property type="component" value="Chromosome"/>
</dbReference>
<dbReference type="GO" id="GO:0009376">
    <property type="term" value="C:HslUV protease complex"/>
    <property type="evidence" value="ECO:0007669"/>
    <property type="project" value="UniProtKB-UniRule"/>
</dbReference>
<dbReference type="GO" id="GO:0005839">
    <property type="term" value="C:proteasome core complex"/>
    <property type="evidence" value="ECO:0007669"/>
    <property type="project" value="InterPro"/>
</dbReference>
<dbReference type="GO" id="GO:0046872">
    <property type="term" value="F:metal ion binding"/>
    <property type="evidence" value="ECO:0007669"/>
    <property type="project" value="UniProtKB-KW"/>
</dbReference>
<dbReference type="GO" id="GO:0004298">
    <property type="term" value="F:threonine-type endopeptidase activity"/>
    <property type="evidence" value="ECO:0007669"/>
    <property type="project" value="UniProtKB-KW"/>
</dbReference>
<dbReference type="GO" id="GO:0051603">
    <property type="term" value="P:proteolysis involved in protein catabolic process"/>
    <property type="evidence" value="ECO:0007669"/>
    <property type="project" value="InterPro"/>
</dbReference>
<dbReference type="CDD" id="cd01913">
    <property type="entry name" value="protease_HslV"/>
    <property type="match status" value="1"/>
</dbReference>
<dbReference type="FunFam" id="3.60.20.10:FF:000002">
    <property type="entry name" value="ATP-dependent protease subunit HslV"/>
    <property type="match status" value="1"/>
</dbReference>
<dbReference type="Gene3D" id="3.60.20.10">
    <property type="entry name" value="Glutamine Phosphoribosylpyrophosphate, subunit 1, domain 1"/>
    <property type="match status" value="1"/>
</dbReference>
<dbReference type="HAMAP" id="MF_00248">
    <property type="entry name" value="HslV"/>
    <property type="match status" value="1"/>
</dbReference>
<dbReference type="InterPro" id="IPR022281">
    <property type="entry name" value="ATP-dep_Prtase_HsIV_su"/>
</dbReference>
<dbReference type="InterPro" id="IPR029055">
    <property type="entry name" value="Ntn_hydrolases_N"/>
</dbReference>
<dbReference type="InterPro" id="IPR001353">
    <property type="entry name" value="Proteasome_sua/b"/>
</dbReference>
<dbReference type="InterPro" id="IPR023333">
    <property type="entry name" value="Proteasome_suB-type"/>
</dbReference>
<dbReference type="NCBIfam" id="TIGR03692">
    <property type="entry name" value="ATP_dep_HslV"/>
    <property type="match status" value="1"/>
</dbReference>
<dbReference type="NCBIfam" id="NF003964">
    <property type="entry name" value="PRK05456.1"/>
    <property type="match status" value="1"/>
</dbReference>
<dbReference type="PANTHER" id="PTHR32194:SF0">
    <property type="entry name" value="ATP-DEPENDENT PROTEASE SUBUNIT HSLV"/>
    <property type="match status" value="1"/>
</dbReference>
<dbReference type="PANTHER" id="PTHR32194">
    <property type="entry name" value="METALLOPROTEASE TLDD"/>
    <property type="match status" value="1"/>
</dbReference>
<dbReference type="Pfam" id="PF00227">
    <property type="entry name" value="Proteasome"/>
    <property type="match status" value="1"/>
</dbReference>
<dbReference type="PIRSF" id="PIRSF039093">
    <property type="entry name" value="HslV"/>
    <property type="match status" value="1"/>
</dbReference>
<dbReference type="SUPFAM" id="SSF56235">
    <property type="entry name" value="N-terminal nucleophile aminohydrolases (Ntn hydrolases)"/>
    <property type="match status" value="1"/>
</dbReference>
<dbReference type="PROSITE" id="PS51476">
    <property type="entry name" value="PROTEASOME_BETA_2"/>
    <property type="match status" value="1"/>
</dbReference>
<name>HSLV_SALCH</name>
<accession>Q57HC5</accession>
<reference key="1">
    <citation type="journal article" date="2005" name="Nucleic Acids Res.">
        <title>The genome sequence of Salmonella enterica serovar Choleraesuis, a highly invasive and resistant zoonotic pathogen.</title>
        <authorList>
            <person name="Chiu C.-H."/>
            <person name="Tang P."/>
            <person name="Chu C."/>
            <person name="Hu S."/>
            <person name="Bao Q."/>
            <person name="Yu J."/>
            <person name="Chou Y.-Y."/>
            <person name="Wang H.-S."/>
            <person name="Lee Y.-S."/>
        </authorList>
    </citation>
    <scope>NUCLEOTIDE SEQUENCE [LARGE SCALE GENOMIC DNA]</scope>
    <source>
        <strain>SC-B67</strain>
    </source>
</reference>
<gene>
    <name evidence="1" type="primary">hslV</name>
    <name type="ordered locus">SCH_3981</name>
</gene>
<feature type="chain" id="PRO_1000012662" description="ATP-dependent protease subunit HslV">
    <location>
        <begin position="1"/>
        <end position="176"/>
    </location>
</feature>
<feature type="active site" evidence="1">
    <location>
        <position position="2"/>
    </location>
</feature>
<feature type="binding site" evidence="1">
    <location>
        <position position="157"/>
    </location>
    <ligand>
        <name>Na(+)</name>
        <dbReference type="ChEBI" id="CHEBI:29101"/>
    </ligand>
</feature>
<feature type="binding site" evidence="1">
    <location>
        <position position="160"/>
    </location>
    <ligand>
        <name>Na(+)</name>
        <dbReference type="ChEBI" id="CHEBI:29101"/>
    </ligand>
</feature>
<feature type="binding site" evidence="1">
    <location>
        <position position="163"/>
    </location>
    <ligand>
        <name>Na(+)</name>
        <dbReference type="ChEBI" id="CHEBI:29101"/>
    </ligand>
</feature>
<organism>
    <name type="scientific">Salmonella choleraesuis (strain SC-B67)</name>
    <dbReference type="NCBI Taxonomy" id="321314"/>
    <lineage>
        <taxon>Bacteria</taxon>
        <taxon>Pseudomonadati</taxon>
        <taxon>Pseudomonadota</taxon>
        <taxon>Gammaproteobacteria</taxon>
        <taxon>Enterobacterales</taxon>
        <taxon>Enterobacteriaceae</taxon>
        <taxon>Salmonella</taxon>
    </lineage>
</organism>
<comment type="function">
    <text evidence="1">Protease subunit of a proteasome-like degradation complex believed to be a general protein degrading machinery.</text>
</comment>
<comment type="catalytic activity">
    <reaction evidence="1">
        <text>ATP-dependent cleavage of peptide bonds with broad specificity.</text>
        <dbReference type="EC" id="3.4.25.2"/>
    </reaction>
</comment>
<comment type="activity regulation">
    <text evidence="1">Allosterically activated by HslU binding.</text>
</comment>
<comment type="subunit">
    <text evidence="1">A double ring-shaped homohexamer of HslV is capped on each side by a ring-shaped HslU homohexamer. The assembly of the HslU/HslV complex is dependent on binding of ATP.</text>
</comment>
<comment type="subcellular location">
    <subcellularLocation>
        <location evidence="1">Cytoplasm</location>
    </subcellularLocation>
</comment>
<comment type="induction">
    <text evidence="1">By heat shock.</text>
</comment>
<comment type="similarity">
    <text evidence="1">Belongs to the peptidase T1B family. HslV subfamily.</text>
</comment>
<protein>
    <recommendedName>
        <fullName evidence="1">ATP-dependent protease subunit HslV</fullName>
        <ecNumber evidence="1">3.4.25.2</ecNumber>
    </recommendedName>
    <alternativeName>
        <fullName evidence="1">Heat shock protein HslV</fullName>
    </alternativeName>
</protein>
<evidence type="ECO:0000255" key="1">
    <source>
        <dbReference type="HAMAP-Rule" id="MF_00248"/>
    </source>
</evidence>
<proteinExistence type="inferred from homology"/>
<keyword id="KW-0021">Allosteric enzyme</keyword>
<keyword id="KW-0963">Cytoplasm</keyword>
<keyword id="KW-0378">Hydrolase</keyword>
<keyword id="KW-0479">Metal-binding</keyword>
<keyword id="KW-0645">Protease</keyword>
<keyword id="KW-0915">Sodium</keyword>
<keyword id="KW-0346">Stress response</keyword>
<keyword id="KW-0888">Threonine protease</keyword>